<name>PURL_JANSC</name>
<proteinExistence type="inferred from homology"/>
<accession>Q28QC2</accession>
<sequence length="719" mass="76016">MTEPTITDDIIKAHGFTDDEYAEVNKILGRAPNYTEMGIFSAMWNEHCSYKSSKKWLRTLPTEGPQVICGPGENAGIVDIGDGQCVVFKMESHNHPSYIEPYQGAATGVGGILRDVFTMGARPIAAMNSLSFGEVAHPKTRQLVHGVVEGVGGYGNCFGVPTIGGEVRFHPAYNGNCLVNAFAAGLADTDKIFYSAASGVGMPVVYLGAKTGRDGVGGATMASAEFDDTIEEKRPTVQVGDPFTEKRLLEATLELMASGAVISIQDMGAAGLTCSAVEMGDKGGLGIRLNLDAVPIREDAMTAYEMMLSESQERMLMVLKPELEDTARAIFEKWDLDFAVVGETIPEDRFVIVHNGETKADLPLSKLASTAPEYDRPWVPTDPAHDMDAVPEVDPIDALRALLFSPNYCSRQWVYQQYDHQVMGDTVMSPGLGAGVVRVHGTDKALAFTSDVTPRYVKANPVEGGKQAVAEAYRNLTAVGAKPLATTDNMNFGNPEKPEIMGQFVGAIKGIGEACLALDTPIVSGNVSLYNETDGTGILPTPTIGAVGLLSSMDDLIAGTARDGHVLLLVGDTNGHLGQSALLAEVFNREDGDAPHVDLGAEKRNGDFIRDNRDWIGACTDLSDGGLALAAFEVAHAAGCGITLDVGDTATLFGEDQARYLISTSFDAAEALMVAAGRAGVPLATVGKVGGASLRIGTSEAPLADLSATYTNAFSQTFA</sequence>
<reference key="1">
    <citation type="submission" date="2006-02" db="EMBL/GenBank/DDBJ databases">
        <title>Complete sequence of chromosome of Jannaschia sp. CCS1.</title>
        <authorList>
            <consortium name="US DOE Joint Genome Institute"/>
            <person name="Copeland A."/>
            <person name="Lucas S."/>
            <person name="Lapidus A."/>
            <person name="Barry K."/>
            <person name="Detter J.C."/>
            <person name="Glavina del Rio T."/>
            <person name="Hammon N."/>
            <person name="Israni S."/>
            <person name="Pitluck S."/>
            <person name="Brettin T."/>
            <person name="Bruce D."/>
            <person name="Han C."/>
            <person name="Tapia R."/>
            <person name="Gilna P."/>
            <person name="Chertkov O."/>
            <person name="Saunders E."/>
            <person name="Schmutz J."/>
            <person name="Larimer F."/>
            <person name="Land M."/>
            <person name="Kyrpides N."/>
            <person name="Lykidis A."/>
            <person name="Moran M.A."/>
            <person name="Belas R."/>
            <person name="Ye W."/>
            <person name="Buchan A."/>
            <person name="Gonzalez J.M."/>
            <person name="Schell M.A."/>
            <person name="Richardson P."/>
        </authorList>
    </citation>
    <scope>NUCLEOTIDE SEQUENCE [LARGE SCALE GENOMIC DNA]</scope>
    <source>
        <strain>CCS1</strain>
    </source>
</reference>
<organism>
    <name type="scientific">Jannaschia sp. (strain CCS1)</name>
    <dbReference type="NCBI Taxonomy" id="290400"/>
    <lineage>
        <taxon>Bacteria</taxon>
        <taxon>Pseudomonadati</taxon>
        <taxon>Pseudomonadota</taxon>
        <taxon>Alphaproteobacteria</taxon>
        <taxon>Rhodobacterales</taxon>
        <taxon>Roseobacteraceae</taxon>
        <taxon>Jannaschia</taxon>
    </lineage>
</organism>
<keyword id="KW-0067">ATP-binding</keyword>
<keyword id="KW-0963">Cytoplasm</keyword>
<keyword id="KW-0436">Ligase</keyword>
<keyword id="KW-0460">Magnesium</keyword>
<keyword id="KW-0479">Metal-binding</keyword>
<keyword id="KW-0547">Nucleotide-binding</keyword>
<keyword id="KW-0658">Purine biosynthesis</keyword>
<keyword id="KW-1185">Reference proteome</keyword>
<evidence type="ECO:0000255" key="1">
    <source>
        <dbReference type="HAMAP-Rule" id="MF_00420"/>
    </source>
</evidence>
<feature type="chain" id="PRO_1000050312" description="Phosphoribosylformylglycinamidine synthase subunit PurL">
    <location>
        <begin position="1"/>
        <end position="719"/>
    </location>
</feature>
<feature type="active site" evidence="1">
    <location>
        <position position="47"/>
    </location>
</feature>
<feature type="active site" description="Proton acceptor" evidence="1">
    <location>
        <position position="93"/>
    </location>
</feature>
<feature type="binding site" evidence="1">
    <location>
        <position position="50"/>
    </location>
    <ligand>
        <name>ATP</name>
        <dbReference type="ChEBI" id="CHEBI:30616"/>
    </ligand>
</feature>
<feature type="binding site" evidence="1">
    <location>
        <position position="89"/>
    </location>
    <ligand>
        <name>ATP</name>
        <dbReference type="ChEBI" id="CHEBI:30616"/>
    </ligand>
</feature>
<feature type="binding site" evidence="1">
    <location>
        <position position="91"/>
    </location>
    <ligand>
        <name>Mg(2+)</name>
        <dbReference type="ChEBI" id="CHEBI:18420"/>
        <label>1</label>
    </ligand>
</feature>
<feature type="binding site" evidence="1">
    <location>
        <begin position="92"/>
        <end position="95"/>
    </location>
    <ligand>
        <name>substrate</name>
    </ligand>
</feature>
<feature type="binding site" evidence="1">
    <location>
        <position position="114"/>
    </location>
    <ligand>
        <name>substrate</name>
    </ligand>
</feature>
<feature type="binding site" evidence="1">
    <location>
        <position position="115"/>
    </location>
    <ligand>
        <name>Mg(2+)</name>
        <dbReference type="ChEBI" id="CHEBI:18420"/>
        <label>2</label>
    </ligand>
</feature>
<feature type="binding site" evidence="1">
    <location>
        <position position="238"/>
    </location>
    <ligand>
        <name>substrate</name>
    </ligand>
</feature>
<feature type="binding site" evidence="1">
    <location>
        <position position="266"/>
    </location>
    <ligand>
        <name>Mg(2+)</name>
        <dbReference type="ChEBI" id="CHEBI:18420"/>
        <label>2</label>
    </ligand>
</feature>
<feature type="binding site" evidence="1">
    <location>
        <begin position="310"/>
        <end position="312"/>
    </location>
    <ligand>
        <name>substrate</name>
    </ligand>
</feature>
<feature type="binding site" evidence="1">
    <location>
        <position position="488"/>
    </location>
    <ligand>
        <name>ATP</name>
        <dbReference type="ChEBI" id="CHEBI:30616"/>
    </ligand>
</feature>
<feature type="binding site" evidence="1">
    <location>
        <position position="525"/>
    </location>
    <ligand>
        <name>ATP</name>
        <dbReference type="ChEBI" id="CHEBI:30616"/>
    </ligand>
</feature>
<feature type="binding site" evidence="1">
    <location>
        <position position="526"/>
    </location>
    <ligand>
        <name>Mg(2+)</name>
        <dbReference type="ChEBI" id="CHEBI:18420"/>
        <label>1</label>
    </ligand>
</feature>
<feature type="binding site" evidence="1">
    <location>
        <position position="528"/>
    </location>
    <ligand>
        <name>substrate</name>
    </ligand>
</feature>
<protein>
    <recommendedName>
        <fullName evidence="1">Phosphoribosylformylglycinamidine synthase subunit PurL</fullName>
        <shortName evidence="1">FGAM synthase</shortName>
        <ecNumber evidence="1">6.3.5.3</ecNumber>
    </recommendedName>
    <alternativeName>
        <fullName evidence="1">Formylglycinamide ribonucleotide amidotransferase subunit II</fullName>
        <shortName evidence="1">FGAR amidotransferase II</shortName>
        <shortName evidence="1">FGAR-AT II</shortName>
    </alternativeName>
    <alternativeName>
        <fullName evidence="1">Glutamine amidotransferase PurL</fullName>
    </alternativeName>
    <alternativeName>
        <fullName evidence="1">Phosphoribosylformylglycinamidine synthase subunit II</fullName>
    </alternativeName>
</protein>
<comment type="function">
    <text evidence="1">Part of the phosphoribosylformylglycinamidine synthase complex involved in the purines biosynthetic pathway. Catalyzes the ATP-dependent conversion of formylglycinamide ribonucleotide (FGAR) and glutamine to yield formylglycinamidine ribonucleotide (FGAM) and glutamate. The FGAM synthase complex is composed of three subunits. PurQ produces an ammonia molecule by converting glutamine to glutamate. PurL transfers the ammonia molecule to FGAR to form FGAM in an ATP-dependent manner. PurS interacts with PurQ and PurL and is thought to assist in the transfer of the ammonia molecule from PurQ to PurL.</text>
</comment>
<comment type="catalytic activity">
    <reaction evidence="1">
        <text>N(2)-formyl-N(1)-(5-phospho-beta-D-ribosyl)glycinamide + L-glutamine + ATP + H2O = 2-formamido-N(1)-(5-O-phospho-beta-D-ribosyl)acetamidine + L-glutamate + ADP + phosphate + H(+)</text>
        <dbReference type="Rhea" id="RHEA:17129"/>
        <dbReference type="ChEBI" id="CHEBI:15377"/>
        <dbReference type="ChEBI" id="CHEBI:15378"/>
        <dbReference type="ChEBI" id="CHEBI:29985"/>
        <dbReference type="ChEBI" id="CHEBI:30616"/>
        <dbReference type="ChEBI" id="CHEBI:43474"/>
        <dbReference type="ChEBI" id="CHEBI:58359"/>
        <dbReference type="ChEBI" id="CHEBI:147286"/>
        <dbReference type="ChEBI" id="CHEBI:147287"/>
        <dbReference type="ChEBI" id="CHEBI:456216"/>
        <dbReference type="EC" id="6.3.5.3"/>
    </reaction>
</comment>
<comment type="pathway">
    <text evidence="1">Purine metabolism; IMP biosynthesis via de novo pathway; 5-amino-1-(5-phospho-D-ribosyl)imidazole from N(2)-formyl-N(1)-(5-phospho-D-ribosyl)glycinamide: step 1/2.</text>
</comment>
<comment type="subunit">
    <text evidence="1">Monomer. Part of the FGAM synthase complex composed of 1 PurL, 1 PurQ and 2 PurS subunits.</text>
</comment>
<comment type="subcellular location">
    <subcellularLocation>
        <location evidence="1">Cytoplasm</location>
    </subcellularLocation>
</comment>
<comment type="similarity">
    <text evidence="1">Belongs to the FGAMS family.</text>
</comment>
<gene>
    <name evidence="1" type="primary">purL</name>
    <name type="ordered locus">Jann_2173</name>
</gene>
<dbReference type="EC" id="6.3.5.3" evidence="1"/>
<dbReference type="EMBL" id="CP000264">
    <property type="protein sequence ID" value="ABD55090.1"/>
    <property type="molecule type" value="Genomic_DNA"/>
</dbReference>
<dbReference type="RefSeq" id="WP_011455294.1">
    <property type="nucleotide sequence ID" value="NC_007802.1"/>
</dbReference>
<dbReference type="SMR" id="Q28QC2"/>
<dbReference type="STRING" id="290400.Jann_2173"/>
<dbReference type="KEGG" id="jan:Jann_2173"/>
<dbReference type="eggNOG" id="COG0046">
    <property type="taxonomic scope" value="Bacteria"/>
</dbReference>
<dbReference type="HOGENOM" id="CLU_003100_0_1_5"/>
<dbReference type="OrthoDB" id="9804441at2"/>
<dbReference type="UniPathway" id="UPA00074">
    <property type="reaction ID" value="UER00128"/>
</dbReference>
<dbReference type="Proteomes" id="UP000008326">
    <property type="component" value="Chromosome"/>
</dbReference>
<dbReference type="GO" id="GO:0005737">
    <property type="term" value="C:cytoplasm"/>
    <property type="evidence" value="ECO:0007669"/>
    <property type="project" value="UniProtKB-SubCell"/>
</dbReference>
<dbReference type="GO" id="GO:0005524">
    <property type="term" value="F:ATP binding"/>
    <property type="evidence" value="ECO:0007669"/>
    <property type="project" value="UniProtKB-UniRule"/>
</dbReference>
<dbReference type="GO" id="GO:0000287">
    <property type="term" value="F:magnesium ion binding"/>
    <property type="evidence" value="ECO:0007669"/>
    <property type="project" value="UniProtKB-UniRule"/>
</dbReference>
<dbReference type="GO" id="GO:0004642">
    <property type="term" value="F:phosphoribosylformylglycinamidine synthase activity"/>
    <property type="evidence" value="ECO:0007669"/>
    <property type="project" value="UniProtKB-UniRule"/>
</dbReference>
<dbReference type="GO" id="GO:0006189">
    <property type="term" value="P:'de novo' IMP biosynthetic process"/>
    <property type="evidence" value="ECO:0007669"/>
    <property type="project" value="UniProtKB-UniRule"/>
</dbReference>
<dbReference type="CDD" id="cd02203">
    <property type="entry name" value="PurL_repeat1"/>
    <property type="match status" value="1"/>
</dbReference>
<dbReference type="CDD" id="cd02204">
    <property type="entry name" value="PurL_repeat2"/>
    <property type="match status" value="1"/>
</dbReference>
<dbReference type="FunFam" id="3.30.1330.10:FF:000004">
    <property type="entry name" value="Phosphoribosylformylglycinamidine synthase subunit PurL"/>
    <property type="match status" value="1"/>
</dbReference>
<dbReference type="Gene3D" id="3.90.650.10">
    <property type="entry name" value="PurM-like C-terminal domain"/>
    <property type="match status" value="2"/>
</dbReference>
<dbReference type="Gene3D" id="3.30.1330.10">
    <property type="entry name" value="PurM-like, N-terminal domain"/>
    <property type="match status" value="2"/>
</dbReference>
<dbReference type="HAMAP" id="MF_00420">
    <property type="entry name" value="PurL_2"/>
    <property type="match status" value="1"/>
</dbReference>
<dbReference type="InterPro" id="IPR010074">
    <property type="entry name" value="PRibForGlyAmidine_synth_PurL"/>
</dbReference>
<dbReference type="InterPro" id="IPR041609">
    <property type="entry name" value="PurL_linker"/>
</dbReference>
<dbReference type="InterPro" id="IPR010918">
    <property type="entry name" value="PurM-like_C_dom"/>
</dbReference>
<dbReference type="InterPro" id="IPR036676">
    <property type="entry name" value="PurM-like_C_sf"/>
</dbReference>
<dbReference type="InterPro" id="IPR016188">
    <property type="entry name" value="PurM-like_N"/>
</dbReference>
<dbReference type="InterPro" id="IPR036921">
    <property type="entry name" value="PurM-like_N_sf"/>
</dbReference>
<dbReference type="NCBIfam" id="TIGR01736">
    <property type="entry name" value="FGAM_synth_II"/>
    <property type="match status" value="1"/>
</dbReference>
<dbReference type="NCBIfam" id="NF002290">
    <property type="entry name" value="PRK01213.1"/>
    <property type="match status" value="1"/>
</dbReference>
<dbReference type="PANTHER" id="PTHR43555">
    <property type="entry name" value="PHOSPHORIBOSYLFORMYLGLYCINAMIDINE SYNTHASE SUBUNIT PURL"/>
    <property type="match status" value="1"/>
</dbReference>
<dbReference type="PANTHER" id="PTHR43555:SF1">
    <property type="entry name" value="PHOSPHORIBOSYLFORMYLGLYCINAMIDINE SYNTHASE SUBUNIT PURL"/>
    <property type="match status" value="1"/>
</dbReference>
<dbReference type="Pfam" id="PF00586">
    <property type="entry name" value="AIRS"/>
    <property type="match status" value="2"/>
</dbReference>
<dbReference type="Pfam" id="PF02769">
    <property type="entry name" value="AIRS_C"/>
    <property type="match status" value="2"/>
</dbReference>
<dbReference type="Pfam" id="PF18072">
    <property type="entry name" value="FGAR-AT_linker"/>
    <property type="match status" value="1"/>
</dbReference>
<dbReference type="PIRSF" id="PIRSF001587">
    <property type="entry name" value="FGAM_synthase_II"/>
    <property type="match status" value="1"/>
</dbReference>
<dbReference type="SUPFAM" id="SSF56042">
    <property type="entry name" value="PurM C-terminal domain-like"/>
    <property type="match status" value="2"/>
</dbReference>
<dbReference type="SUPFAM" id="SSF55326">
    <property type="entry name" value="PurM N-terminal domain-like"/>
    <property type="match status" value="2"/>
</dbReference>